<evidence type="ECO:0000255" key="1">
    <source>
        <dbReference type="HAMAP-Rule" id="MF_01458"/>
    </source>
</evidence>
<evidence type="ECO:0000256" key="2">
    <source>
        <dbReference type="SAM" id="MobiDB-lite"/>
    </source>
</evidence>
<evidence type="ECO:0000305" key="3"/>
<proteinExistence type="inferred from homology"/>
<feature type="chain" id="PRO_0000084643" description="ATP-dependent zinc metalloprotease FtsH">
    <location>
        <begin position="1"/>
        <end position="787"/>
    </location>
</feature>
<feature type="topological domain" description="Cytoplasmic" evidence="1">
    <location>
        <begin position="1"/>
        <end position="5"/>
    </location>
</feature>
<feature type="transmembrane region" description="Helical" evidence="1">
    <location>
        <begin position="6"/>
        <end position="26"/>
    </location>
</feature>
<feature type="topological domain" description="Extracellular" evidence="1">
    <location>
        <begin position="27"/>
        <end position="110"/>
    </location>
</feature>
<feature type="transmembrane region" description="Helical" evidence="1">
    <location>
        <begin position="111"/>
        <end position="131"/>
    </location>
</feature>
<feature type="topological domain" description="Cytoplasmic" evidence="1">
    <location>
        <begin position="132"/>
        <end position="787"/>
    </location>
</feature>
<feature type="region of interest" description="Disordered" evidence="2">
    <location>
        <begin position="616"/>
        <end position="787"/>
    </location>
</feature>
<feature type="compositionally biased region" description="Low complexity" evidence="2">
    <location>
        <begin position="650"/>
        <end position="671"/>
    </location>
</feature>
<feature type="compositionally biased region" description="Low complexity" evidence="2">
    <location>
        <begin position="700"/>
        <end position="709"/>
    </location>
</feature>
<feature type="compositionally biased region" description="Pro residues" evidence="2">
    <location>
        <begin position="710"/>
        <end position="720"/>
    </location>
</feature>
<feature type="compositionally biased region" description="Low complexity" evidence="2">
    <location>
        <begin position="721"/>
        <end position="732"/>
    </location>
</feature>
<feature type="compositionally biased region" description="Pro residues" evidence="2">
    <location>
        <begin position="733"/>
        <end position="762"/>
    </location>
</feature>
<feature type="active site" evidence="1">
    <location>
        <position position="426"/>
    </location>
</feature>
<feature type="binding site" evidence="1">
    <location>
        <begin position="203"/>
        <end position="210"/>
    </location>
    <ligand>
        <name>ATP</name>
        <dbReference type="ChEBI" id="CHEBI:30616"/>
    </ligand>
</feature>
<feature type="binding site" evidence="1">
    <location>
        <position position="425"/>
    </location>
    <ligand>
        <name>Zn(2+)</name>
        <dbReference type="ChEBI" id="CHEBI:29105"/>
        <note>catalytic</note>
    </ligand>
</feature>
<feature type="binding site" evidence="1">
    <location>
        <position position="429"/>
    </location>
    <ligand>
        <name>Zn(2+)</name>
        <dbReference type="ChEBI" id="CHEBI:29105"/>
        <note>catalytic</note>
    </ligand>
</feature>
<feature type="binding site" evidence="1">
    <location>
        <position position="501"/>
    </location>
    <ligand>
        <name>Zn(2+)</name>
        <dbReference type="ChEBI" id="CHEBI:29105"/>
        <note>catalytic</note>
    </ligand>
</feature>
<comment type="function">
    <text evidence="1">Acts as a processive, ATP-dependent zinc metallopeptidase for both cytoplasmic and membrane proteins. Plays a role in the quality control of integral membrane proteins.</text>
</comment>
<comment type="cofactor">
    <cofactor evidence="1">
        <name>Zn(2+)</name>
        <dbReference type="ChEBI" id="CHEBI:29105"/>
    </cofactor>
    <text evidence="1">Binds 1 zinc ion per subunit.</text>
</comment>
<comment type="subunit">
    <text evidence="1">Homohexamer.</text>
</comment>
<comment type="subcellular location">
    <subcellularLocation>
        <location evidence="1">Cell membrane</location>
        <topology evidence="1">Multi-pass membrane protein</topology>
        <orientation evidence="1">Cytoplasmic side</orientation>
    </subcellularLocation>
</comment>
<comment type="similarity">
    <text evidence="1">In the central section; belongs to the AAA ATPase family.</text>
</comment>
<comment type="similarity">
    <text evidence="1">In the C-terminal section; belongs to the peptidase M41 family.</text>
</comment>
<comment type="sequence caution" evidence="3">
    <conflict type="erroneous initiation">
        <sequence resource="EMBL-CDS" id="CAC29730"/>
    </conflict>
    <text>Extended N-terminus.</text>
</comment>
<sequence length="787" mass="85107">MNRKNVIRMVTAIAVVVLLGWSFFYFSDDTRGYKFVDTSVAMSQINGHNVKSAQIDDREQQLRLTLKKGNNDTDGSDKVITKYPTGYAVDLFNALSAKNTKVTTAVNEGSILGELLVYVLPLLLLVGLFVMFSRMQGGARMGFGFGKSRAKQLSKDMPKTTFADVAGVDEAVEELYEIKDFLQNPCRYQTLGAKIPKGVLLYGPPGTGKTLLARAVAGEAGVPFFTISGSDFVEMFVGVGASRVRDLFDQAKQNSPCIIFVDEIDAVGRQRGTGLGGGHDEREQTLNQLLVEMDGFGDRAGVILIAATNRPDILDPALLRPGRFDRQIPVSNPDLAGRRAVLRVHSKGKPIADDADLDGLAKRTVGMTGADLANVVNEAALLTARENGLVITGPALEEAVDRVIGGPRRKGRIISEQEKKITAYHEGGHTLAAWAMPDIEPIYKVTILARGRTGGHAVAVPEEDKGLRTRSEMIAQLVFAMGGRAAEELVFREPTTGAVSDIEKATKIARSMVTEFGMSSKLGAVRYGSEHGDPFLGRTMGTQADYSHEVARDIDDEVRKLIEAAHTEAWEILTEYRDVLDTLAGELLEKETLHRPELEGIFASVEKRPRLTMFDDFGGRIPSDKPPIKTPGELAIERGEPWPQPVPEPAFKAAIARASQAAEASHQAAQSDTDGPPGQGANGSHAGDRQRQHGPTQPDYGAPPGWHAPGWPPQQPPDYWYPPEQQPSQSPYWPQPAPSYPGQAPPPYPSYPPCPSYPPPGQSAPDAGKPPAQLDEGVSPSNPPAHG</sequence>
<gene>
    <name evidence="1" type="primary">ftsH</name>
    <name type="ordered locus">ML0222</name>
    <name type="ORF">MLCB2548.09c</name>
</gene>
<keyword id="KW-0067">ATP-binding</keyword>
<keyword id="KW-1003">Cell membrane</keyword>
<keyword id="KW-0378">Hydrolase</keyword>
<keyword id="KW-0472">Membrane</keyword>
<keyword id="KW-0479">Metal-binding</keyword>
<keyword id="KW-0482">Metalloprotease</keyword>
<keyword id="KW-0547">Nucleotide-binding</keyword>
<keyword id="KW-0645">Protease</keyword>
<keyword id="KW-1185">Reference proteome</keyword>
<keyword id="KW-0812">Transmembrane</keyword>
<keyword id="KW-1133">Transmembrane helix</keyword>
<keyword id="KW-0862">Zinc</keyword>
<protein>
    <recommendedName>
        <fullName evidence="1">ATP-dependent zinc metalloprotease FtsH</fullName>
        <ecNumber evidence="1">3.4.24.-</ecNumber>
    </recommendedName>
</protein>
<dbReference type="EC" id="3.4.24.-" evidence="1"/>
<dbReference type="EMBL" id="AL023093">
    <property type="protein sequence ID" value="CAA18796.1"/>
    <property type="molecule type" value="Genomic_DNA"/>
</dbReference>
<dbReference type="EMBL" id="AL583917">
    <property type="protein sequence ID" value="CAC29730.1"/>
    <property type="status" value="ALT_INIT"/>
    <property type="molecule type" value="Genomic_DNA"/>
</dbReference>
<dbReference type="PIR" id="F86936">
    <property type="entry name" value="F86936"/>
</dbReference>
<dbReference type="RefSeq" id="WP_041323651.1">
    <property type="nucleotide sequence ID" value="NC_002677.1"/>
</dbReference>
<dbReference type="SMR" id="Q9CD58"/>
<dbReference type="STRING" id="272631.gene:17574039"/>
<dbReference type="MEROPS" id="M41.015"/>
<dbReference type="KEGG" id="mle:ML0222"/>
<dbReference type="Leproma" id="ML0222"/>
<dbReference type="eggNOG" id="COG0465">
    <property type="taxonomic scope" value="Bacteria"/>
</dbReference>
<dbReference type="HOGENOM" id="CLU_000688_16_1_11"/>
<dbReference type="Proteomes" id="UP000000806">
    <property type="component" value="Chromosome"/>
</dbReference>
<dbReference type="GO" id="GO:0005886">
    <property type="term" value="C:plasma membrane"/>
    <property type="evidence" value="ECO:0007669"/>
    <property type="project" value="UniProtKB-SubCell"/>
</dbReference>
<dbReference type="GO" id="GO:0005524">
    <property type="term" value="F:ATP binding"/>
    <property type="evidence" value="ECO:0007669"/>
    <property type="project" value="UniProtKB-UniRule"/>
</dbReference>
<dbReference type="GO" id="GO:0016887">
    <property type="term" value="F:ATP hydrolysis activity"/>
    <property type="evidence" value="ECO:0007669"/>
    <property type="project" value="UniProtKB-UniRule"/>
</dbReference>
<dbReference type="GO" id="GO:0004176">
    <property type="term" value="F:ATP-dependent peptidase activity"/>
    <property type="evidence" value="ECO:0007669"/>
    <property type="project" value="InterPro"/>
</dbReference>
<dbReference type="GO" id="GO:0004222">
    <property type="term" value="F:metalloendopeptidase activity"/>
    <property type="evidence" value="ECO:0007669"/>
    <property type="project" value="InterPro"/>
</dbReference>
<dbReference type="GO" id="GO:0008270">
    <property type="term" value="F:zinc ion binding"/>
    <property type="evidence" value="ECO:0007669"/>
    <property type="project" value="UniProtKB-UniRule"/>
</dbReference>
<dbReference type="GO" id="GO:0030163">
    <property type="term" value="P:protein catabolic process"/>
    <property type="evidence" value="ECO:0007669"/>
    <property type="project" value="UniProtKB-UniRule"/>
</dbReference>
<dbReference type="GO" id="GO:0006508">
    <property type="term" value="P:proteolysis"/>
    <property type="evidence" value="ECO:0007669"/>
    <property type="project" value="UniProtKB-KW"/>
</dbReference>
<dbReference type="CDD" id="cd19501">
    <property type="entry name" value="RecA-like_FtsH"/>
    <property type="match status" value="1"/>
</dbReference>
<dbReference type="FunFam" id="1.10.8.60:FF:000001">
    <property type="entry name" value="ATP-dependent zinc metalloprotease FtsH"/>
    <property type="match status" value="1"/>
</dbReference>
<dbReference type="FunFam" id="1.20.58.760:FF:000001">
    <property type="entry name" value="ATP-dependent zinc metalloprotease FtsH"/>
    <property type="match status" value="1"/>
</dbReference>
<dbReference type="FunFam" id="3.40.50.300:FF:000001">
    <property type="entry name" value="ATP-dependent zinc metalloprotease FtsH"/>
    <property type="match status" value="1"/>
</dbReference>
<dbReference type="Gene3D" id="1.10.8.60">
    <property type="match status" value="1"/>
</dbReference>
<dbReference type="Gene3D" id="3.40.50.300">
    <property type="entry name" value="P-loop containing nucleotide triphosphate hydrolases"/>
    <property type="match status" value="1"/>
</dbReference>
<dbReference type="Gene3D" id="1.20.58.760">
    <property type="entry name" value="Peptidase M41"/>
    <property type="match status" value="1"/>
</dbReference>
<dbReference type="HAMAP" id="MF_01458">
    <property type="entry name" value="FtsH"/>
    <property type="match status" value="1"/>
</dbReference>
<dbReference type="InterPro" id="IPR003593">
    <property type="entry name" value="AAA+_ATPase"/>
</dbReference>
<dbReference type="InterPro" id="IPR041569">
    <property type="entry name" value="AAA_lid_3"/>
</dbReference>
<dbReference type="InterPro" id="IPR003959">
    <property type="entry name" value="ATPase_AAA_core"/>
</dbReference>
<dbReference type="InterPro" id="IPR003960">
    <property type="entry name" value="ATPase_AAA_CS"/>
</dbReference>
<dbReference type="InterPro" id="IPR005936">
    <property type="entry name" value="FtsH"/>
</dbReference>
<dbReference type="InterPro" id="IPR027417">
    <property type="entry name" value="P-loop_NTPase"/>
</dbReference>
<dbReference type="InterPro" id="IPR011546">
    <property type="entry name" value="Pept_M41_FtsH_extracell"/>
</dbReference>
<dbReference type="InterPro" id="IPR000642">
    <property type="entry name" value="Peptidase_M41"/>
</dbReference>
<dbReference type="InterPro" id="IPR037219">
    <property type="entry name" value="Peptidase_M41-like"/>
</dbReference>
<dbReference type="NCBIfam" id="TIGR01241">
    <property type="entry name" value="FtsH_fam"/>
    <property type="match status" value="1"/>
</dbReference>
<dbReference type="PANTHER" id="PTHR23076:SF97">
    <property type="entry name" value="ATP-DEPENDENT ZINC METALLOPROTEASE YME1L1"/>
    <property type="match status" value="1"/>
</dbReference>
<dbReference type="PANTHER" id="PTHR23076">
    <property type="entry name" value="METALLOPROTEASE M41 FTSH"/>
    <property type="match status" value="1"/>
</dbReference>
<dbReference type="Pfam" id="PF00004">
    <property type="entry name" value="AAA"/>
    <property type="match status" value="1"/>
</dbReference>
<dbReference type="Pfam" id="PF17862">
    <property type="entry name" value="AAA_lid_3"/>
    <property type="match status" value="1"/>
</dbReference>
<dbReference type="Pfam" id="PF06480">
    <property type="entry name" value="FtsH_ext"/>
    <property type="match status" value="1"/>
</dbReference>
<dbReference type="Pfam" id="PF01434">
    <property type="entry name" value="Peptidase_M41"/>
    <property type="match status" value="1"/>
</dbReference>
<dbReference type="SMART" id="SM00382">
    <property type="entry name" value="AAA"/>
    <property type="match status" value="1"/>
</dbReference>
<dbReference type="SUPFAM" id="SSF140990">
    <property type="entry name" value="FtsH protease domain-like"/>
    <property type="match status" value="1"/>
</dbReference>
<dbReference type="SUPFAM" id="SSF52540">
    <property type="entry name" value="P-loop containing nucleoside triphosphate hydrolases"/>
    <property type="match status" value="1"/>
</dbReference>
<dbReference type="PROSITE" id="PS00674">
    <property type="entry name" value="AAA"/>
    <property type="match status" value="1"/>
</dbReference>
<name>FTSH_MYCLE</name>
<accession>Q9CD58</accession>
<accession>O69532</accession>
<reference key="1">
    <citation type="journal article" date="2001" name="Nature">
        <title>Massive gene decay in the leprosy bacillus.</title>
        <authorList>
            <person name="Cole S.T."/>
            <person name="Eiglmeier K."/>
            <person name="Parkhill J."/>
            <person name="James K.D."/>
            <person name="Thomson N.R."/>
            <person name="Wheeler P.R."/>
            <person name="Honore N."/>
            <person name="Garnier T."/>
            <person name="Churcher C.M."/>
            <person name="Harris D.E."/>
            <person name="Mungall K.L."/>
            <person name="Basham D."/>
            <person name="Brown D."/>
            <person name="Chillingworth T."/>
            <person name="Connor R."/>
            <person name="Davies R.M."/>
            <person name="Devlin K."/>
            <person name="Duthoy S."/>
            <person name="Feltwell T."/>
            <person name="Fraser A."/>
            <person name="Hamlin N."/>
            <person name="Holroyd S."/>
            <person name="Hornsby T."/>
            <person name="Jagels K."/>
            <person name="Lacroix C."/>
            <person name="Maclean J."/>
            <person name="Moule S."/>
            <person name="Murphy L.D."/>
            <person name="Oliver K."/>
            <person name="Quail M.A."/>
            <person name="Rajandream M.A."/>
            <person name="Rutherford K.M."/>
            <person name="Rutter S."/>
            <person name="Seeger K."/>
            <person name="Simon S."/>
            <person name="Simmonds M."/>
            <person name="Skelton J."/>
            <person name="Squares R."/>
            <person name="Squares S."/>
            <person name="Stevens K."/>
            <person name="Taylor K."/>
            <person name="Whitehead S."/>
            <person name="Woodward J.R."/>
            <person name="Barrell B.G."/>
        </authorList>
    </citation>
    <scope>NUCLEOTIDE SEQUENCE [LARGE SCALE GENOMIC DNA]</scope>
    <source>
        <strain>TN</strain>
    </source>
</reference>
<organism>
    <name type="scientific">Mycobacterium leprae (strain TN)</name>
    <dbReference type="NCBI Taxonomy" id="272631"/>
    <lineage>
        <taxon>Bacteria</taxon>
        <taxon>Bacillati</taxon>
        <taxon>Actinomycetota</taxon>
        <taxon>Actinomycetes</taxon>
        <taxon>Mycobacteriales</taxon>
        <taxon>Mycobacteriaceae</taxon>
        <taxon>Mycobacterium</taxon>
    </lineage>
</organism>